<dbReference type="EMBL" id="X53098">
    <property type="protein sequence ID" value="CAA37262.1"/>
    <property type="molecule type" value="Genomic_RNA"/>
</dbReference>
<dbReference type="PIR" id="S10312">
    <property type="entry name" value="HMIVBJ"/>
</dbReference>
<dbReference type="SMR" id="P17504"/>
<dbReference type="GlyCosmos" id="P17504">
    <property type="glycosylation" value="9 sites, No reported glycans"/>
</dbReference>
<dbReference type="GO" id="GO:0020002">
    <property type="term" value="C:host cell plasma membrane"/>
    <property type="evidence" value="ECO:0007669"/>
    <property type="project" value="UniProtKB-SubCell"/>
</dbReference>
<dbReference type="GO" id="GO:0016020">
    <property type="term" value="C:membrane"/>
    <property type="evidence" value="ECO:0007669"/>
    <property type="project" value="UniProtKB-UniRule"/>
</dbReference>
<dbReference type="GO" id="GO:0019031">
    <property type="term" value="C:viral envelope"/>
    <property type="evidence" value="ECO:0007669"/>
    <property type="project" value="UniProtKB-UniRule"/>
</dbReference>
<dbReference type="GO" id="GO:0055036">
    <property type="term" value="C:virion membrane"/>
    <property type="evidence" value="ECO:0007669"/>
    <property type="project" value="UniProtKB-SubCell"/>
</dbReference>
<dbReference type="GO" id="GO:0046789">
    <property type="term" value="F:host cell surface receptor binding"/>
    <property type="evidence" value="ECO:0007669"/>
    <property type="project" value="UniProtKB-UniRule"/>
</dbReference>
<dbReference type="GO" id="GO:0075509">
    <property type="term" value="P:endocytosis involved in viral entry into host cell"/>
    <property type="evidence" value="ECO:0007669"/>
    <property type="project" value="UniProtKB-KW"/>
</dbReference>
<dbReference type="GO" id="GO:0039654">
    <property type="term" value="P:fusion of virus membrane with host endosome membrane"/>
    <property type="evidence" value="ECO:0007669"/>
    <property type="project" value="UniProtKB-UniRule"/>
</dbReference>
<dbReference type="GO" id="GO:0019064">
    <property type="term" value="P:fusion of virus membrane with host plasma membrane"/>
    <property type="evidence" value="ECO:0007669"/>
    <property type="project" value="InterPro"/>
</dbReference>
<dbReference type="GO" id="GO:0046761">
    <property type="term" value="P:viral budding from plasma membrane"/>
    <property type="evidence" value="ECO:0007669"/>
    <property type="project" value="UniProtKB-UniRule"/>
</dbReference>
<dbReference type="GO" id="GO:0019062">
    <property type="term" value="P:virion attachment to host cell"/>
    <property type="evidence" value="ECO:0007669"/>
    <property type="project" value="UniProtKB-KW"/>
</dbReference>
<dbReference type="Gene3D" id="3.90.20.10">
    <property type="match status" value="1"/>
</dbReference>
<dbReference type="Gene3D" id="3.90.209.20">
    <property type="match status" value="1"/>
</dbReference>
<dbReference type="Gene3D" id="2.10.77.10">
    <property type="entry name" value="Hemagglutinin Chain A, Domain 2"/>
    <property type="match status" value="1"/>
</dbReference>
<dbReference type="HAMAP" id="MF_04072">
    <property type="entry name" value="INFV_HEMA"/>
    <property type="match status" value="1"/>
</dbReference>
<dbReference type="InterPro" id="IPR008980">
    <property type="entry name" value="Capsid_hemagglutn"/>
</dbReference>
<dbReference type="InterPro" id="IPR013828">
    <property type="entry name" value="Hemagglutn_HA1_a/b_dom_sf"/>
</dbReference>
<dbReference type="InterPro" id="IPR001364">
    <property type="entry name" value="Hemagglutn_influenz_A/B"/>
</dbReference>
<dbReference type="InterPro" id="IPR000386">
    <property type="entry name" value="Hemagglutn_influenz_B"/>
</dbReference>
<dbReference type="Pfam" id="PF00509">
    <property type="entry name" value="Hemagglutinin"/>
    <property type="match status" value="1"/>
</dbReference>
<dbReference type="PRINTS" id="PR00329">
    <property type="entry name" value="HEMAGGLUTN12"/>
</dbReference>
<dbReference type="PRINTS" id="PR00331">
    <property type="entry name" value="HEMAGGLUTN2"/>
</dbReference>
<dbReference type="SUPFAM" id="SSF58064">
    <property type="entry name" value="Influenza hemagglutinin (stalk)"/>
    <property type="match status" value="1"/>
</dbReference>
<dbReference type="SUPFAM" id="SSF49818">
    <property type="entry name" value="Viral protein domain"/>
    <property type="match status" value="1"/>
</dbReference>
<keyword id="KW-1015">Disulfide bond</keyword>
<keyword id="KW-1170">Fusion of virus membrane with host endosomal membrane</keyword>
<keyword id="KW-1168">Fusion of virus membrane with host membrane</keyword>
<keyword id="KW-0325">Glycoprotein</keyword>
<keyword id="KW-0348">Hemagglutinin</keyword>
<keyword id="KW-1032">Host cell membrane</keyword>
<keyword id="KW-1043">Host membrane</keyword>
<keyword id="KW-0945">Host-virus interaction</keyword>
<keyword id="KW-0449">Lipoprotein</keyword>
<keyword id="KW-0472">Membrane</keyword>
<keyword id="KW-0564">Palmitate</keyword>
<keyword id="KW-0732">Signal</keyword>
<keyword id="KW-0812">Transmembrane</keyword>
<keyword id="KW-1133">Transmembrane helix</keyword>
<keyword id="KW-1161">Viral attachment to host cell</keyword>
<keyword id="KW-0261">Viral envelope protein</keyword>
<keyword id="KW-1162">Viral penetration into host cytoplasm</keyword>
<keyword id="KW-0946">Virion</keyword>
<keyword id="KW-1164">Virus endocytosis by host</keyword>
<keyword id="KW-1160">Virus entry into host cell</keyword>
<organismHost>
    <name type="scientific">Homo sapiens</name>
    <name type="common">Human</name>
    <dbReference type="NCBI Taxonomy" id="9606"/>
</organismHost>
<gene>
    <name evidence="1" type="primary">HA</name>
</gene>
<feature type="signal peptide" evidence="1">
    <location>
        <begin position="1"/>
        <end position="15"/>
    </location>
</feature>
<feature type="chain" id="PRO_0000440544" description="Hemagglutinin" evidence="1">
    <location>
        <begin position="16"/>
        <end position="585"/>
    </location>
</feature>
<feature type="chain" id="PRO_0000440545" description="Hemagglutinin HA1 chain" evidence="1">
    <location>
        <begin position="16"/>
        <end position="361"/>
    </location>
</feature>
<feature type="chain" id="PRO_0000039087" description="Hemagglutinin HA2 chain" evidence="1">
    <location>
        <begin position="363"/>
        <end position="585"/>
    </location>
</feature>
<feature type="topological domain" description="Extracellular" evidence="1">
    <location>
        <begin position="16"/>
        <end position="553"/>
    </location>
</feature>
<feature type="transmembrane region" description="Helical" evidence="1">
    <location>
        <begin position="554"/>
        <end position="574"/>
    </location>
</feature>
<feature type="topological domain" description="Cytoplasmic" evidence="1">
    <location>
        <begin position="575"/>
        <end position="585"/>
    </location>
</feature>
<feature type="site" description="Cleavage; by host" evidence="1">
    <location>
        <begin position="362"/>
        <end position="363"/>
    </location>
</feature>
<feature type="lipid moiety-binding region" description="S-palmitoyl cysteine; by host" evidence="1">
    <location>
        <position position="581"/>
    </location>
</feature>
<feature type="lipid moiety-binding region" description="S-palmitoyl cysteine; by host" evidence="1">
    <location>
        <position position="584"/>
    </location>
</feature>
<feature type="glycosylation site" description="N-linked (GlcNAc...) asparagine; by host" evidence="1">
    <location>
        <position position="40"/>
    </location>
</feature>
<feature type="glycosylation site" description="N-linked (GlcNAc...) asparagine; by host" evidence="1">
    <location>
        <position position="74"/>
    </location>
</feature>
<feature type="glycosylation site" description="N-linked (GlcNAc...) asparagine; by host" evidence="1">
    <location>
        <position position="160"/>
    </location>
</feature>
<feature type="glycosylation site" description="N-linked (GlcNAc...) asparagine; by host" evidence="1">
    <location>
        <position position="181"/>
    </location>
</feature>
<feature type="glycosylation site" description="N-linked (GlcNAc...) asparagine; by host" evidence="1">
    <location>
        <position position="319"/>
    </location>
</feature>
<feature type="glycosylation site" description="N-linked (GlcNAc...) asparagine; by host" evidence="1">
    <location>
        <position position="348"/>
    </location>
</feature>
<feature type="glycosylation site" description="N-linked (GlcNAc...) asparagine; by host" evidence="1">
    <location>
        <position position="507"/>
    </location>
</feature>
<feature type="glycosylation site" description="N-linked (GlcNAc...) asparagine; by host" evidence="1">
    <location>
        <position position="533"/>
    </location>
</feature>
<feature type="glycosylation site" description="N-linked (GlcNAc...) asparagine; by host" evidence="1">
    <location>
        <position position="546"/>
    </location>
</feature>
<feature type="disulfide bond" description="Interchain (between HA1 and HA2 chains)" evidence="1">
    <location>
        <begin position="19"/>
        <end position="499"/>
    </location>
</feature>
<feature type="disulfide bond" evidence="1">
    <location>
        <begin position="75"/>
        <end position="87"/>
    </location>
</feature>
<feature type="disulfide bond" evidence="1">
    <location>
        <begin position="109"/>
        <end position="158"/>
    </location>
</feature>
<feature type="disulfide bond" evidence="1">
    <location>
        <begin position="506"/>
        <end position="510"/>
    </location>
</feature>
<reference key="1">
    <citation type="journal article" date="1990" name="Nucleic Acids Res.">
        <title>Nucleotide sequence of the HA gene of influenza B/Beijing/1/87.</title>
        <authorList>
            <person name="Dayan S."/>
            <person name="Ruigrok R.W.H."/>
            <person name="Daniels R.S."/>
        </authorList>
    </citation>
    <scope>NUCLEOTIDE SEQUENCE [GENOMIC RNA]</scope>
</reference>
<sequence>MKAIIVLLMVVTSNADRICTGITSSNSPHVVKTATQGEVNVTGVIPLTTTPTKSHFANLKGTKTRGKLCPKCLNCTDLDVALGRPKCMGTIPSAKASILHEVKPVTSGCFPIMHDRTKIRQLPNLLRGYEHIRLSTHNVINAETAPGGPYKVGTSGSCPNVTNGNGFFATMAWAVPKNDNNKTATNPLTVEVPYICTEGEDQITVWGFHSDNEAQMVKLYGDSKPQKFTSSANGVTTHYVSQIGGFPNQAEDGGLPQSGRIVVDYMVQKSGKTGTITYQRGILLPQKVWCASGRSKVIKGSLPLIGERDCLHEKYGGLNKSKPYYTGEHAKAIGNCPIWVKTPLKLANGTKYRPPAKLLKERGFFGAIAGFLEGGWEGMIAGWHGYTSHGAHGVAVAADLKSTQEAINKITKNLNSLSELEVKNLQRLSGAMDELHNEILELDEKVDDLRADTISSQIELAVLLSNEGIINSEDEHLLALERKLKKMLGPSAVDIGNGCFETKHKCNQTCLDRIAAGTFNAGEFSLPTFDSLNITAASLNDDGLDNHTILLYYSTAASSLAVTLMIAIFIVYMVSRDNVSCSICL</sequence>
<evidence type="ECO:0000255" key="1">
    <source>
        <dbReference type="HAMAP-Rule" id="MF_04072"/>
    </source>
</evidence>
<evidence type="ECO:0000305" key="2"/>
<name>HEMA_INBBE</name>
<organism>
    <name type="scientific">Influenza B virus (strain B/Beijing/1/1987)</name>
    <dbReference type="NCBI Taxonomy" id="11525"/>
    <lineage>
        <taxon>Viruses</taxon>
        <taxon>Riboviria</taxon>
        <taxon>Orthornavirae</taxon>
        <taxon>Negarnaviricota</taxon>
        <taxon>Polyploviricotina</taxon>
        <taxon>Insthoviricetes</taxon>
        <taxon>Articulavirales</taxon>
        <taxon>Orthomyxoviridae</taxon>
        <taxon>Betainfluenzavirus</taxon>
        <taxon>Betainfluenzavirus influenzae</taxon>
        <taxon>Influenza B virus</taxon>
    </lineage>
</organism>
<proteinExistence type="inferred from homology"/>
<comment type="function">
    <text evidence="1">Binds to sialic acid-containing receptors on the cell surface, bringing about the attachment of the virus particle to the cell. Plays a major role in the determination of host range restriction and virulence. Class I viral fusion protein. Responsible for penetration of the virus into the cell cytoplasm by mediating the fusion of the membrane of the endocytosed virus particle with the endosomal membrane. Low pH in endosomes induce an irreversible conformational change in HA2, releasing the fusion hydrophobic peptide. Several trimers are required to form a competent fusion pore.</text>
</comment>
<comment type="subunit">
    <text evidence="1">Homotrimer of disulfide-linked HA1-HA2.</text>
</comment>
<comment type="subcellular location">
    <subcellularLocation>
        <location evidence="1">Virion membrane</location>
        <topology evidence="1">Single-pass type I membrane protein</topology>
    </subcellularLocation>
    <subcellularLocation>
        <location evidence="1">Host apical cell membrane</location>
        <topology evidence="1">Single-pass type I membrane protein</topology>
    </subcellularLocation>
    <text evidence="1">Targeted to the apical plasma membrane in epithelial polarized cells through a signal present in the transmembrane domain. Associated with glycosphingolipid- and cholesterol-enriched detergent-resistant lipid rafts.</text>
</comment>
<comment type="PTM">
    <text evidence="1">Palmitoylated.</text>
</comment>
<comment type="PTM">
    <text evidence="1">In natural infection, inactive HA is matured into HA1 and HA2 outside the cell by one or more trypsin-like, arginine-specific endoprotease secreted by the bronchial epithelial cells. One identified protease that may be involved in this process is secreted in lungs by club cells.</text>
</comment>
<comment type="miscellaneous">
    <text>Major glycoprotein, comprises over 80% of the envelope proteins present in virus particle.</text>
</comment>
<comment type="miscellaneous">
    <text>The extent of infection into host organism is determined by HA. Influenza viruses bud from the apical surface of polarized epithelial cells (e.g. bronchial epithelial cells) into lumen of lungs and are therefore usually pneumotropic. The reason is that HA is cleaved by tryptase clara which is restricted to lungs. However, HAs of H5 and H7 pantropic avian viruses subtypes can be cleaved by furin and subtilisin-type enzymes, allowing the virus to grow in other organs than lungs.</text>
</comment>
<comment type="miscellaneous">
    <text evidence="2">The influenza B genome consist of 8 RNA segments. Genetic variation of hemagglutinin and/or neuraminidase genes results in the emergence of new influenza strains. The mechanism of variation can be the result of point mutations or the result of genetic reassortment between segments of two different strains.</text>
</comment>
<comment type="similarity">
    <text evidence="1">Belongs to the influenza viruses hemagglutinin family.</text>
</comment>
<accession>P17504</accession>
<protein>
    <recommendedName>
        <fullName evidence="1">Hemagglutinin</fullName>
    </recommendedName>
    <component>
        <recommendedName>
            <fullName evidence="1">Hemagglutinin HA1 chain</fullName>
        </recommendedName>
    </component>
    <component>
        <recommendedName>
            <fullName evidence="1">Hemagglutinin HA2 chain</fullName>
        </recommendedName>
    </component>
</protein>